<organism>
    <name type="scientific">Treponema pallidum subsp. pallidum (strain SS14)</name>
    <dbReference type="NCBI Taxonomy" id="455434"/>
    <lineage>
        <taxon>Bacteria</taxon>
        <taxon>Pseudomonadati</taxon>
        <taxon>Spirochaetota</taxon>
        <taxon>Spirochaetia</taxon>
        <taxon>Spirochaetales</taxon>
        <taxon>Treponemataceae</taxon>
        <taxon>Treponema</taxon>
    </lineage>
</organism>
<comment type="function">
    <text evidence="1">Catalyzes the interconversion of L-alanine and D-alanine. May also act on other amino acids.</text>
</comment>
<comment type="catalytic activity">
    <reaction evidence="1">
        <text>L-alanine = D-alanine</text>
        <dbReference type="Rhea" id="RHEA:20249"/>
        <dbReference type="ChEBI" id="CHEBI:57416"/>
        <dbReference type="ChEBI" id="CHEBI:57972"/>
        <dbReference type="EC" id="5.1.1.1"/>
    </reaction>
</comment>
<comment type="cofactor">
    <cofactor evidence="1">
        <name>pyridoxal 5'-phosphate</name>
        <dbReference type="ChEBI" id="CHEBI:597326"/>
    </cofactor>
</comment>
<comment type="pathway">
    <text evidence="1">Amino-acid biosynthesis; D-alanine biosynthesis; D-alanine from L-alanine: step 1/1.</text>
</comment>
<comment type="similarity">
    <text evidence="1">Belongs to the alanine racemase family.</text>
</comment>
<feature type="chain" id="PRO_1000138631" description="Alanine racemase">
    <location>
        <begin position="1"/>
        <end position="377"/>
    </location>
</feature>
<feature type="active site" description="Proton acceptor; specific for D-alanine" evidence="1">
    <location>
        <position position="33"/>
    </location>
</feature>
<feature type="active site" description="Proton acceptor; specific for L-alanine" evidence="1">
    <location>
        <position position="267"/>
    </location>
</feature>
<feature type="binding site" evidence="1">
    <location>
        <position position="134"/>
    </location>
    <ligand>
        <name>substrate</name>
    </ligand>
</feature>
<feature type="binding site" evidence="1">
    <location>
        <position position="315"/>
    </location>
    <ligand>
        <name>substrate</name>
    </ligand>
</feature>
<feature type="modified residue" description="N6-(pyridoxal phosphate)lysine" evidence="1">
    <location>
        <position position="33"/>
    </location>
</feature>
<gene>
    <name type="primary">alr</name>
    <name type="ordered locus">TPASS_0681</name>
</gene>
<dbReference type="EC" id="5.1.1.1" evidence="1"/>
<dbReference type="EMBL" id="CP000805">
    <property type="protein sequence ID" value="ACD71099.1"/>
    <property type="molecule type" value="Genomic_DNA"/>
</dbReference>
<dbReference type="RefSeq" id="WP_012460586.1">
    <property type="nucleotide sequence ID" value="NC_021508.1"/>
</dbReference>
<dbReference type="SMR" id="B2S3S0"/>
<dbReference type="GeneID" id="93876450"/>
<dbReference type="KEGG" id="tpp:TPASS_0681"/>
<dbReference type="PATRIC" id="fig|455434.6.peg.674"/>
<dbReference type="UniPathway" id="UPA00042">
    <property type="reaction ID" value="UER00497"/>
</dbReference>
<dbReference type="Proteomes" id="UP000001202">
    <property type="component" value="Chromosome"/>
</dbReference>
<dbReference type="GO" id="GO:0005829">
    <property type="term" value="C:cytosol"/>
    <property type="evidence" value="ECO:0007669"/>
    <property type="project" value="TreeGrafter"/>
</dbReference>
<dbReference type="GO" id="GO:0008784">
    <property type="term" value="F:alanine racemase activity"/>
    <property type="evidence" value="ECO:0007669"/>
    <property type="project" value="UniProtKB-UniRule"/>
</dbReference>
<dbReference type="GO" id="GO:0030170">
    <property type="term" value="F:pyridoxal phosphate binding"/>
    <property type="evidence" value="ECO:0007669"/>
    <property type="project" value="UniProtKB-UniRule"/>
</dbReference>
<dbReference type="GO" id="GO:0030632">
    <property type="term" value="P:D-alanine biosynthetic process"/>
    <property type="evidence" value="ECO:0007669"/>
    <property type="project" value="UniProtKB-UniRule"/>
</dbReference>
<dbReference type="CDD" id="cd00430">
    <property type="entry name" value="PLPDE_III_AR"/>
    <property type="match status" value="1"/>
</dbReference>
<dbReference type="FunFam" id="3.20.20.10:FF:000002">
    <property type="entry name" value="Alanine racemase"/>
    <property type="match status" value="1"/>
</dbReference>
<dbReference type="Gene3D" id="3.20.20.10">
    <property type="entry name" value="Alanine racemase"/>
    <property type="match status" value="1"/>
</dbReference>
<dbReference type="Gene3D" id="2.40.37.10">
    <property type="entry name" value="Lyase, Ornithine Decarboxylase, Chain A, domain 1"/>
    <property type="match status" value="1"/>
</dbReference>
<dbReference type="HAMAP" id="MF_01201">
    <property type="entry name" value="Ala_racemase"/>
    <property type="match status" value="1"/>
</dbReference>
<dbReference type="InterPro" id="IPR000821">
    <property type="entry name" value="Ala_racemase"/>
</dbReference>
<dbReference type="InterPro" id="IPR009006">
    <property type="entry name" value="Ala_racemase/Decarboxylase_C"/>
</dbReference>
<dbReference type="InterPro" id="IPR011079">
    <property type="entry name" value="Ala_racemase_C"/>
</dbReference>
<dbReference type="InterPro" id="IPR001608">
    <property type="entry name" value="Ala_racemase_N"/>
</dbReference>
<dbReference type="InterPro" id="IPR020622">
    <property type="entry name" value="Ala_racemase_pyridoxalP-BS"/>
</dbReference>
<dbReference type="InterPro" id="IPR029066">
    <property type="entry name" value="PLP-binding_barrel"/>
</dbReference>
<dbReference type="NCBIfam" id="TIGR00492">
    <property type="entry name" value="alr"/>
    <property type="match status" value="1"/>
</dbReference>
<dbReference type="PANTHER" id="PTHR30511">
    <property type="entry name" value="ALANINE RACEMASE"/>
    <property type="match status" value="1"/>
</dbReference>
<dbReference type="PANTHER" id="PTHR30511:SF0">
    <property type="entry name" value="ALANINE RACEMASE, CATABOLIC-RELATED"/>
    <property type="match status" value="1"/>
</dbReference>
<dbReference type="Pfam" id="PF00842">
    <property type="entry name" value="Ala_racemase_C"/>
    <property type="match status" value="1"/>
</dbReference>
<dbReference type="Pfam" id="PF01168">
    <property type="entry name" value="Ala_racemase_N"/>
    <property type="match status" value="1"/>
</dbReference>
<dbReference type="PRINTS" id="PR00992">
    <property type="entry name" value="ALARACEMASE"/>
</dbReference>
<dbReference type="SMART" id="SM01005">
    <property type="entry name" value="Ala_racemase_C"/>
    <property type="match status" value="1"/>
</dbReference>
<dbReference type="SUPFAM" id="SSF50621">
    <property type="entry name" value="Alanine racemase C-terminal domain-like"/>
    <property type="match status" value="1"/>
</dbReference>
<dbReference type="SUPFAM" id="SSF51419">
    <property type="entry name" value="PLP-binding barrel"/>
    <property type="match status" value="1"/>
</dbReference>
<dbReference type="PROSITE" id="PS00395">
    <property type="entry name" value="ALANINE_RACEMASE"/>
    <property type="match status" value="1"/>
</dbReference>
<keyword id="KW-0413">Isomerase</keyword>
<keyword id="KW-0663">Pyridoxal phosphate</keyword>
<accession>B2S3S0</accession>
<reference key="1">
    <citation type="journal article" date="2008" name="BMC Microbiol.">
        <title>Complete genome sequence of Treponema pallidum ssp. pallidum strain SS14 determined with oligonucleotide arrays.</title>
        <authorList>
            <person name="Matejkova P."/>
            <person name="Strouhal M."/>
            <person name="Smajs D."/>
            <person name="Norris S.J."/>
            <person name="Palzkill T."/>
            <person name="Petrosino J.F."/>
            <person name="Sodergren E."/>
            <person name="Norton J.E."/>
            <person name="Singh J."/>
            <person name="Richmond T.A."/>
            <person name="Molla M.N."/>
            <person name="Albert T.J."/>
            <person name="Weinstock G.M."/>
        </authorList>
    </citation>
    <scope>NUCLEOTIDE SEQUENCE [LARGE SCALE GENOMIC DNA]</scope>
    <source>
        <strain>SS14</strain>
    </source>
</reference>
<sequence>MACNQALIHLANLRHNLGEIMSRTRARVCLPVKADAYGHGACDVAQAALSCGVHSFAVACVQEASQLRAAGVRAPILCLSTPTAEEISSLIEHRVHTVISERAHIALIARALRQSADTGATCGVHVKIDTGMGRIGCAPDEACALVQMVCATPGLHLEGVCTHFSVADSVRAEDLQYTEMQRAHFMHCVQYIRKSGISIPLVHAANSAALLCHPRAHFDMVRPGLLAYGYAPESVHPAVRSVFLPVMELVTQVRAIKKIPAGAYVSYQRLWRAHTETHVGILPIGYADGVMRALSPGLQVCIGGKWYPVVGAICMDQCVVDLGTPLRVTVGDRVTLFGPQDAGGPGQGADVLASHAGTIPYELLCAIGKRVERVYIR</sequence>
<evidence type="ECO:0000255" key="1">
    <source>
        <dbReference type="HAMAP-Rule" id="MF_01201"/>
    </source>
</evidence>
<protein>
    <recommendedName>
        <fullName evidence="1">Alanine racemase</fullName>
        <ecNumber evidence="1">5.1.1.1</ecNumber>
    </recommendedName>
</protein>
<name>ALR_TREPS</name>
<proteinExistence type="inferred from homology"/>